<accession>P59197</accession>
<dbReference type="EC" id="2.5.1.75" evidence="1"/>
<dbReference type="EMBL" id="AB000785">
    <property type="protein sequence ID" value="BAA22627.1"/>
    <property type="molecule type" value="Genomic_DNA"/>
</dbReference>
<dbReference type="EMBL" id="AE005674">
    <property type="protein sequence ID" value="AAN45743.1"/>
    <property type="molecule type" value="Genomic_DNA"/>
</dbReference>
<dbReference type="EMBL" id="AE014073">
    <property type="protein sequence ID" value="AAP19526.1"/>
    <property type="molecule type" value="Genomic_DNA"/>
</dbReference>
<dbReference type="RefSeq" id="NP_710036.1">
    <property type="nucleotide sequence ID" value="NC_004337.2"/>
</dbReference>
<dbReference type="RefSeq" id="WP_001280367.1">
    <property type="nucleotide sequence ID" value="NZ_WPGW01000048.1"/>
</dbReference>
<dbReference type="SMR" id="P59197"/>
<dbReference type="STRING" id="198214.SF4326"/>
<dbReference type="PaxDb" id="198214-SF4326"/>
<dbReference type="GeneID" id="1026857"/>
<dbReference type="KEGG" id="sfl:SF4326"/>
<dbReference type="KEGG" id="sfx:S4594"/>
<dbReference type="PATRIC" id="fig|198214.7.peg.5100"/>
<dbReference type="HOGENOM" id="CLU_032616_0_0_6"/>
<dbReference type="Proteomes" id="UP000001006">
    <property type="component" value="Chromosome"/>
</dbReference>
<dbReference type="Proteomes" id="UP000002673">
    <property type="component" value="Chromosome"/>
</dbReference>
<dbReference type="GO" id="GO:0005524">
    <property type="term" value="F:ATP binding"/>
    <property type="evidence" value="ECO:0007669"/>
    <property type="project" value="UniProtKB-UniRule"/>
</dbReference>
<dbReference type="GO" id="GO:0052381">
    <property type="term" value="F:tRNA dimethylallyltransferase activity"/>
    <property type="evidence" value="ECO:0007669"/>
    <property type="project" value="UniProtKB-UniRule"/>
</dbReference>
<dbReference type="GO" id="GO:0006400">
    <property type="term" value="P:tRNA modification"/>
    <property type="evidence" value="ECO:0007669"/>
    <property type="project" value="TreeGrafter"/>
</dbReference>
<dbReference type="FunFam" id="1.10.20.140:FF:000001">
    <property type="entry name" value="tRNA dimethylallyltransferase"/>
    <property type="match status" value="1"/>
</dbReference>
<dbReference type="FunFam" id="1.10.287.890:FF:000001">
    <property type="entry name" value="tRNA dimethylallyltransferase"/>
    <property type="match status" value="1"/>
</dbReference>
<dbReference type="Gene3D" id="1.10.20.140">
    <property type="match status" value="1"/>
</dbReference>
<dbReference type="Gene3D" id="3.40.50.300">
    <property type="entry name" value="P-loop containing nucleotide triphosphate hydrolases"/>
    <property type="match status" value="1"/>
</dbReference>
<dbReference type="HAMAP" id="MF_00185">
    <property type="entry name" value="IPP_trans"/>
    <property type="match status" value="1"/>
</dbReference>
<dbReference type="InterPro" id="IPR039657">
    <property type="entry name" value="Dimethylallyltransferase"/>
</dbReference>
<dbReference type="InterPro" id="IPR018022">
    <property type="entry name" value="IPT"/>
</dbReference>
<dbReference type="InterPro" id="IPR027417">
    <property type="entry name" value="P-loop_NTPase"/>
</dbReference>
<dbReference type="NCBIfam" id="TIGR00174">
    <property type="entry name" value="miaA"/>
    <property type="match status" value="1"/>
</dbReference>
<dbReference type="PANTHER" id="PTHR11088">
    <property type="entry name" value="TRNA DIMETHYLALLYLTRANSFERASE"/>
    <property type="match status" value="1"/>
</dbReference>
<dbReference type="PANTHER" id="PTHR11088:SF60">
    <property type="entry name" value="TRNA DIMETHYLALLYLTRANSFERASE"/>
    <property type="match status" value="1"/>
</dbReference>
<dbReference type="Pfam" id="PF01715">
    <property type="entry name" value="IPPT"/>
    <property type="match status" value="1"/>
</dbReference>
<dbReference type="SUPFAM" id="SSF52540">
    <property type="entry name" value="P-loop containing nucleoside triphosphate hydrolases"/>
    <property type="match status" value="1"/>
</dbReference>
<name>MIAA_SHIFL</name>
<protein>
    <recommendedName>
        <fullName evidence="1">tRNA dimethylallyltransferase</fullName>
        <ecNumber evidence="1">2.5.1.75</ecNumber>
    </recommendedName>
    <alternativeName>
        <fullName evidence="1">Dimethylallyl diphosphate:tRNA dimethylallyltransferase</fullName>
        <shortName evidence="1">DMAPP:tRNA dimethylallyltransferase</shortName>
        <shortName evidence="1">DMATase</shortName>
    </alternativeName>
    <alternativeName>
        <fullName evidence="1">Isopentenyl-diphosphate:tRNA isopentenyltransferase</fullName>
        <shortName evidence="1">IPP transferase</shortName>
        <shortName evidence="1">IPPT</shortName>
        <shortName evidence="1">IPTase</shortName>
    </alternativeName>
</protein>
<reference key="1">
    <citation type="journal article" date="1997" name="J. Bacteriol.">
        <title>The modified nucleoside 2-methylthio-N6-isopentenyladenosine in tRNA of Shigella flexneri is required for expression of virulence genes.</title>
        <authorList>
            <person name="Durand J.M.B."/>
            <person name="Bjoerk G.R."/>
            <person name="Kuwae A."/>
            <person name="Yoshikawa M."/>
            <person name="Sasakawa C."/>
        </authorList>
    </citation>
    <scope>NUCLEOTIDE SEQUENCE [GENOMIC DNA]</scope>
    <source>
        <strain>YSH6000 / Serotype 2a</strain>
    </source>
</reference>
<reference key="2">
    <citation type="journal article" date="2002" name="Nucleic Acids Res.">
        <title>Genome sequence of Shigella flexneri 2a: insights into pathogenicity through comparison with genomes of Escherichia coli K12 and O157.</title>
        <authorList>
            <person name="Jin Q."/>
            <person name="Yuan Z."/>
            <person name="Xu J."/>
            <person name="Wang Y."/>
            <person name="Shen Y."/>
            <person name="Lu W."/>
            <person name="Wang J."/>
            <person name="Liu H."/>
            <person name="Yang J."/>
            <person name="Yang F."/>
            <person name="Zhang X."/>
            <person name="Zhang J."/>
            <person name="Yang G."/>
            <person name="Wu H."/>
            <person name="Qu D."/>
            <person name="Dong J."/>
            <person name="Sun L."/>
            <person name="Xue Y."/>
            <person name="Zhao A."/>
            <person name="Gao Y."/>
            <person name="Zhu J."/>
            <person name="Kan B."/>
            <person name="Ding K."/>
            <person name="Chen S."/>
            <person name="Cheng H."/>
            <person name="Yao Z."/>
            <person name="He B."/>
            <person name="Chen R."/>
            <person name="Ma D."/>
            <person name="Qiang B."/>
            <person name="Wen Y."/>
            <person name="Hou Y."/>
            <person name="Yu J."/>
        </authorList>
    </citation>
    <scope>NUCLEOTIDE SEQUENCE [LARGE SCALE GENOMIC DNA]</scope>
    <source>
        <strain>301 / Serotype 2a</strain>
    </source>
</reference>
<reference key="3">
    <citation type="journal article" date="2003" name="Infect. Immun.">
        <title>Complete genome sequence and comparative genomics of Shigella flexneri serotype 2a strain 2457T.</title>
        <authorList>
            <person name="Wei J."/>
            <person name="Goldberg M.B."/>
            <person name="Burland V."/>
            <person name="Venkatesan M.M."/>
            <person name="Deng W."/>
            <person name="Fournier G."/>
            <person name="Mayhew G.F."/>
            <person name="Plunkett G. III"/>
            <person name="Rose D.J."/>
            <person name="Darling A."/>
            <person name="Mau B."/>
            <person name="Perna N.T."/>
            <person name="Payne S.M."/>
            <person name="Runyen-Janecky L.J."/>
            <person name="Zhou S."/>
            <person name="Schwartz D.C."/>
            <person name="Blattner F.R."/>
        </authorList>
    </citation>
    <scope>NUCLEOTIDE SEQUENCE [LARGE SCALE GENOMIC DNA]</scope>
    <source>
        <strain>ATCC 700930 / 2457T / Serotype 2a</strain>
    </source>
</reference>
<comment type="function">
    <text evidence="1">Catalyzes the transfer of a dimethylallyl group onto the adenine at position 37 in tRNAs that read codons beginning with uridine, leading to the formation of N6-(dimethylallyl)adenosine (i(6)A).</text>
</comment>
<comment type="catalytic activity">
    <reaction evidence="1">
        <text>adenosine(37) in tRNA + dimethylallyl diphosphate = N(6)-dimethylallyladenosine(37) in tRNA + diphosphate</text>
        <dbReference type="Rhea" id="RHEA:26482"/>
        <dbReference type="Rhea" id="RHEA-COMP:10162"/>
        <dbReference type="Rhea" id="RHEA-COMP:10375"/>
        <dbReference type="ChEBI" id="CHEBI:33019"/>
        <dbReference type="ChEBI" id="CHEBI:57623"/>
        <dbReference type="ChEBI" id="CHEBI:74411"/>
        <dbReference type="ChEBI" id="CHEBI:74415"/>
        <dbReference type="EC" id="2.5.1.75"/>
    </reaction>
</comment>
<comment type="cofactor">
    <cofactor evidence="1">
        <name>Mg(2+)</name>
        <dbReference type="ChEBI" id="CHEBI:18420"/>
    </cofactor>
</comment>
<comment type="subunit">
    <text evidence="1">Monomer.</text>
</comment>
<comment type="similarity">
    <text evidence="1">Belongs to the IPP transferase family.</text>
</comment>
<keyword id="KW-0067">ATP-binding</keyword>
<keyword id="KW-0460">Magnesium</keyword>
<keyword id="KW-0547">Nucleotide-binding</keyword>
<keyword id="KW-1185">Reference proteome</keyword>
<keyword id="KW-0808">Transferase</keyword>
<keyword id="KW-0819">tRNA processing</keyword>
<organism>
    <name type="scientific">Shigella flexneri</name>
    <dbReference type="NCBI Taxonomy" id="623"/>
    <lineage>
        <taxon>Bacteria</taxon>
        <taxon>Pseudomonadati</taxon>
        <taxon>Pseudomonadota</taxon>
        <taxon>Gammaproteobacteria</taxon>
        <taxon>Enterobacterales</taxon>
        <taxon>Enterobacteriaceae</taxon>
        <taxon>Shigella</taxon>
    </lineage>
</organism>
<sequence length="316" mass="35093">MSDISKASLPKAIFLMGPTASGKTALAIELRKILPVELISVDSVLIYKGMDIGTAKPNAEELLAAPHRLLDIRDPSQAYSAADFRRDALAEMADITAAGRIPLLVGGTMLYFKALLEGLSPLPSADPEVRARIEQQAAEQGWESLHRQLQEVDPVAAARIHPNDPQRLSRALEVFFISGKTLTELTQTSGDALPYQVHQFAIAPASRELLHQRIEQRFHQMLASGFEAEVRALFARGDLHTDLPSIRCVGYRQMWSYLEGEISYDEMVYRGVCATRQLAKRQITWLRGWEGVHWLDSEKPEQARDEVLQVVGAIAG</sequence>
<feature type="chain" id="PRO_0000163971" description="tRNA dimethylallyltransferase">
    <location>
        <begin position="1"/>
        <end position="316"/>
    </location>
</feature>
<feature type="region of interest" description="Interaction with substrate tRNA" evidence="1">
    <location>
        <begin position="42"/>
        <end position="45"/>
    </location>
</feature>
<feature type="region of interest" description="Interaction with substrate tRNA" evidence="1">
    <location>
        <begin position="166"/>
        <end position="170"/>
    </location>
</feature>
<feature type="region of interest" description="Interaction with substrate tRNA" evidence="1">
    <location>
        <begin position="247"/>
        <end position="252"/>
    </location>
</feature>
<feature type="region of interest" description="Interaction with substrate tRNA" evidence="1">
    <location>
        <begin position="280"/>
        <end position="287"/>
    </location>
</feature>
<feature type="binding site" evidence="1">
    <location>
        <begin position="17"/>
        <end position="24"/>
    </location>
    <ligand>
        <name>ATP</name>
        <dbReference type="ChEBI" id="CHEBI:30616"/>
    </ligand>
</feature>
<feature type="binding site" evidence="1">
    <location>
        <begin position="19"/>
        <end position="24"/>
    </location>
    <ligand>
        <name>substrate</name>
    </ligand>
</feature>
<feature type="site" description="Interaction with substrate tRNA" evidence="1">
    <location>
        <position position="108"/>
    </location>
</feature>
<feature type="site" description="Interaction with substrate tRNA" evidence="1">
    <location>
        <position position="130"/>
    </location>
</feature>
<feature type="sequence conflict" description="In Ref. 1; BAA22627." evidence="2" ref="1">
    <original>V</original>
    <variation>A</variation>
    <location>
        <position position="44"/>
    </location>
</feature>
<proteinExistence type="inferred from homology"/>
<evidence type="ECO:0000255" key="1">
    <source>
        <dbReference type="HAMAP-Rule" id="MF_00185"/>
    </source>
</evidence>
<evidence type="ECO:0000305" key="2"/>
<gene>
    <name evidence="1" type="primary">miaA</name>
    <name type="ordered locus">SF4326</name>
    <name type="ordered locus">S4594</name>
</gene>